<protein>
    <recommendedName>
        <fullName evidence="1">Adenine deaminase</fullName>
        <shortName evidence="1">ADE</shortName>
        <ecNumber evidence="1">3.5.4.2</ecNumber>
    </recommendedName>
    <alternativeName>
        <fullName evidence="1">Adenine aminohydrolase</fullName>
        <shortName evidence="1">AAH</shortName>
    </alternativeName>
</protein>
<evidence type="ECO:0000255" key="1">
    <source>
        <dbReference type="HAMAP-Rule" id="MF_01962"/>
    </source>
</evidence>
<organism>
    <name type="scientific">Rhodospirillum rubrum (strain ATCC 11170 / ATH 1.1.1 / DSM 467 / LMG 4362 / NCIMB 8255 / S1)</name>
    <dbReference type="NCBI Taxonomy" id="269796"/>
    <lineage>
        <taxon>Bacteria</taxon>
        <taxon>Pseudomonadati</taxon>
        <taxon>Pseudomonadota</taxon>
        <taxon>Alphaproteobacteria</taxon>
        <taxon>Rhodospirillales</taxon>
        <taxon>Rhodospirillaceae</taxon>
        <taxon>Rhodospirillum</taxon>
    </lineage>
</organism>
<feature type="chain" id="PRO_1000081930" description="Adenine deaminase">
    <location>
        <begin position="1"/>
        <end position="334"/>
    </location>
</feature>
<feature type="active site" description="Proton donor" evidence="1">
    <location>
        <position position="200"/>
    </location>
</feature>
<feature type="binding site" evidence="1">
    <location>
        <position position="17"/>
    </location>
    <ligand>
        <name>Zn(2+)</name>
        <dbReference type="ChEBI" id="CHEBI:29105"/>
        <note>catalytic</note>
    </ligand>
</feature>
<feature type="binding site" evidence="1">
    <location>
        <position position="19"/>
    </location>
    <ligand>
        <name>Zn(2+)</name>
        <dbReference type="ChEBI" id="CHEBI:29105"/>
        <note>catalytic</note>
    </ligand>
</feature>
<feature type="binding site" evidence="1">
    <location>
        <position position="197"/>
    </location>
    <ligand>
        <name>Zn(2+)</name>
        <dbReference type="ChEBI" id="CHEBI:29105"/>
        <note>catalytic</note>
    </ligand>
</feature>
<feature type="binding site" evidence="1">
    <location>
        <position position="278"/>
    </location>
    <ligand>
        <name>Zn(2+)</name>
        <dbReference type="ChEBI" id="CHEBI:29105"/>
        <note>catalytic</note>
    </ligand>
</feature>
<feature type="binding site" evidence="1">
    <location>
        <position position="279"/>
    </location>
    <ligand>
        <name>substrate</name>
    </ligand>
</feature>
<feature type="site" description="Important for catalytic activity" evidence="1">
    <location>
        <position position="221"/>
    </location>
</feature>
<sequence length="334" mass="36593">MAVDPAFLHALPKVELHLHIEGSLEPEMMVALAERNGLRLPYASVEAVRAAYDFQNLQDFLDLYYQGMAVLRTERDFEDLAMAYFQRAAAQNVLHAEIFFDPQGHTARGVALEAVIAGLTSARKRAEAELGVSSELILSFLRHLSEEEAFATLEEALPHRDQFIGVGLDSSEVGHPPAKFARVFARARAEGLRLVAHAGEEGPPDYVREALDLLAIDRLDHGNRALEDEALIERLIAEGMALTVCPLSNLKLRVVDDLGAHPLKAMLERGLKATINSDDPSYFGGYMLENMAAVAEALALETHHLRTLTANAIDASFASPARKAEMHARLAAVN</sequence>
<gene>
    <name type="ordered locus">Rru_A0766</name>
</gene>
<keyword id="KW-0378">Hydrolase</keyword>
<keyword id="KW-0479">Metal-binding</keyword>
<keyword id="KW-0546">Nucleotide metabolism</keyword>
<keyword id="KW-1185">Reference proteome</keyword>
<keyword id="KW-0862">Zinc</keyword>
<accession>Q2RWC5</accession>
<reference key="1">
    <citation type="journal article" date="2011" name="Stand. Genomic Sci.">
        <title>Complete genome sequence of Rhodospirillum rubrum type strain (S1).</title>
        <authorList>
            <person name="Munk A.C."/>
            <person name="Copeland A."/>
            <person name="Lucas S."/>
            <person name="Lapidus A."/>
            <person name="Del Rio T.G."/>
            <person name="Barry K."/>
            <person name="Detter J.C."/>
            <person name="Hammon N."/>
            <person name="Israni S."/>
            <person name="Pitluck S."/>
            <person name="Brettin T."/>
            <person name="Bruce D."/>
            <person name="Han C."/>
            <person name="Tapia R."/>
            <person name="Gilna P."/>
            <person name="Schmutz J."/>
            <person name="Larimer F."/>
            <person name="Land M."/>
            <person name="Kyrpides N.C."/>
            <person name="Mavromatis K."/>
            <person name="Richardson P."/>
            <person name="Rohde M."/>
            <person name="Goeker M."/>
            <person name="Klenk H.P."/>
            <person name="Zhang Y."/>
            <person name="Roberts G.P."/>
            <person name="Reslewic S."/>
            <person name="Schwartz D.C."/>
        </authorList>
    </citation>
    <scope>NUCLEOTIDE SEQUENCE [LARGE SCALE GENOMIC DNA]</scope>
    <source>
        <strain>ATCC 11170 / ATH 1.1.1 / DSM 467 / LMG 4362 / NCIMB 8255 / S1</strain>
    </source>
</reference>
<name>ADE_RHORT</name>
<comment type="function">
    <text evidence="1">Catalyzes the hydrolytic deamination of adenine to hypoxanthine. Plays an important role in the purine salvage pathway and in nitrogen catabolism.</text>
</comment>
<comment type="catalytic activity">
    <reaction evidence="1">
        <text>adenine + H2O + H(+) = hypoxanthine + NH4(+)</text>
        <dbReference type="Rhea" id="RHEA:23688"/>
        <dbReference type="ChEBI" id="CHEBI:15377"/>
        <dbReference type="ChEBI" id="CHEBI:15378"/>
        <dbReference type="ChEBI" id="CHEBI:16708"/>
        <dbReference type="ChEBI" id="CHEBI:17368"/>
        <dbReference type="ChEBI" id="CHEBI:28938"/>
        <dbReference type="EC" id="3.5.4.2"/>
    </reaction>
</comment>
<comment type="cofactor">
    <cofactor evidence="1">
        <name>Zn(2+)</name>
        <dbReference type="ChEBI" id="CHEBI:29105"/>
    </cofactor>
    <text evidence="1">Binds 1 zinc ion per subunit.</text>
</comment>
<comment type="similarity">
    <text evidence="1">Belongs to the metallo-dependent hydrolases superfamily. Adenosine and AMP deaminases family. Adenine deaminase type 2 subfamily.</text>
</comment>
<proteinExistence type="inferred from homology"/>
<dbReference type="EC" id="3.5.4.2" evidence="1"/>
<dbReference type="EMBL" id="CP000230">
    <property type="protein sequence ID" value="ABC21570.1"/>
    <property type="molecule type" value="Genomic_DNA"/>
</dbReference>
<dbReference type="RefSeq" id="WP_011388524.1">
    <property type="nucleotide sequence ID" value="NC_007643.1"/>
</dbReference>
<dbReference type="RefSeq" id="YP_425857.1">
    <property type="nucleotide sequence ID" value="NC_007643.1"/>
</dbReference>
<dbReference type="SMR" id="Q2RWC5"/>
<dbReference type="STRING" id="269796.Rru_A0766"/>
<dbReference type="EnsemblBacteria" id="ABC21570">
    <property type="protein sequence ID" value="ABC21570"/>
    <property type="gene ID" value="Rru_A0766"/>
</dbReference>
<dbReference type="KEGG" id="rru:Rru_A0766"/>
<dbReference type="PATRIC" id="fig|269796.9.peg.819"/>
<dbReference type="eggNOG" id="COG1816">
    <property type="taxonomic scope" value="Bacteria"/>
</dbReference>
<dbReference type="HOGENOM" id="CLU_039228_7_0_5"/>
<dbReference type="PhylomeDB" id="Q2RWC5"/>
<dbReference type="Proteomes" id="UP000001929">
    <property type="component" value="Chromosome"/>
</dbReference>
<dbReference type="GO" id="GO:0005829">
    <property type="term" value="C:cytosol"/>
    <property type="evidence" value="ECO:0007669"/>
    <property type="project" value="TreeGrafter"/>
</dbReference>
<dbReference type="GO" id="GO:0000034">
    <property type="term" value="F:adenine deaminase activity"/>
    <property type="evidence" value="ECO:0007669"/>
    <property type="project" value="UniProtKB-UniRule"/>
</dbReference>
<dbReference type="GO" id="GO:0008270">
    <property type="term" value="F:zinc ion binding"/>
    <property type="evidence" value="ECO:0007669"/>
    <property type="project" value="UniProtKB-UniRule"/>
</dbReference>
<dbReference type="GO" id="GO:0006146">
    <property type="term" value="P:adenine catabolic process"/>
    <property type="evidence" value="ECO:0007669"/>
    <property type="project" value="UniProtKB-UniRule"/>
</dbReference>
<dbReference type="GO" id="GO:0043103">
    <property type="term" value="P:hypoxanthine salvage"/>
    <property type="evidence" value="ECO:0007669"/>
    <property type="project" value="UniProtKB-UniRule"/>
</dbReference>
<dbReference type="GO" id="GO:0009117">
    <property type="term" value="P:nucleotide metabolic process"/>
    <property type="evidence" value="ECO:0007669"/>
    <property type="project" value="UniProtKB-KW"/>
</dbReference>
<dbReference type="CDD" id="cd01320">
    <property type="entry name" value="ADA"/>
    <property type="match status" value="1"/>
</dbReference>
<dbReference type="FunFam" id="3.20.20.140:FF:000039">
    <property type="entry name" value="Adenine deaminase"/>
    <property type="match status" value="1"/>
</dbReference>
<dbReference type="Gene3D" id="3.20.20.140">
    <property type="entry name" value="Metal-dependent hydrolases"/>
    <property type="match status" value="1"/>
</dbReference>
<dbReference type="HAMAP" id="MF_01962">
    <property type="entry name" value="Adenine_deaminase"/>
    <property type="match status" value="1"/>
</dbReference>
<dbReference type="InterPro" id="IPR001365">
    <property type="entry name" value="A_deaminase_dom"/>
</dbReference>
<dbReference type="InterPro" id="IPR028892">
    <property type="entry name" value="ADE"/>
</dbReference>
<dbReference type="InterPro" id="IPR006330">
    <property type="entry name" value="Ado/ade_deaminase"/>
</dbReference>
<dbReference type="InterPro" id="IPR032466">
    <property type="entry name" value="Metal_Hydrolase"/>
</dbReference>
<dbReference type="NCBIfam" id="TIGR01430">
    <property type="entry name" value="aden_deam"/>
    <property type="match status" value="1"/>
</dbReference>
<dbReference type="NCBIfam" id="NF006850">
    <property type="entry name" value="PRK09358.1-6"/>
    <property type="match status" value="1"/>
</dbReference>
<dbReference type="PANTHER" id="PTHR43114">
    <property type="entry name" value="ADENINE DEAMINASE"/>
    <property type="match status" value="1"/>
</dbReference>
<dbReference type="PANTHER" id="PTHR43114:SF6">
    <property type="entry name" value="ADENINE DEAMINASE"/>
    <property type="match status" value="1"/>
</dbReference>
<dbReference type="Pfam" id="PF00962">
    <property type="entry name" value="A_deaminase"/>
    <property type="match status" value="1"/>
</dbReference>
<dbReference type="SUPFAM" id="SSF51556">
    <property type="entry name" value="Metallo-dependent hydrolases"/>
    <property type="match status" value="1"/>
</dbReference>